<accession>Q2SDF4</accession>
<name>Y4620_HAHCH</name>
<evidence type="ECO:0000255" key="1">
    <source>
        <dbReference type="HAMAP-Rule" id="MF_00632"/>
    </source>
</evidence>
<dbReference type="EMBL" id="CP000155">
    <property type="protein sequence ID" value="ABC31320.1"/>
    <property type="molecule type" value="Genomic_DNA"/>
</dbReference>
<dbReference type="RefSeq" id="WP_011398385.1">
    <property type="nucleotide sequence ID" value="NC_007645.1"/>
</dbReference>
<dbReference type="SMR" id="Q2SDF4"/>
<dbReference type="STRING" id="349521.HCH_04620"/>
<dbReference type="KEGG" id="hch:HCH_04620"/>
<dbReference type="eggNOG" id="COG1666">
    <property type="taxonomic scope" value="Bacteria"/>
</dbReference>
<dbReference type="HOGENOM" id="CLU_099839_1_0_6"/>
<dbReference type="OrthoDB" id="9801447at2"/>
<dbReference type="Proteomes" id="UP000000238">
    <property type="component" value="Chromosome"/>
</dbReference>
<dbReference type="GO" id="GO:0005829">
    <property type="term" value="C:cytosol"/>
    <property type="evidence" value="ECO:0007669"/>
    <property type="project" value="TreeGrafter"/>
</dbReference>
<dbReference type="GO" id="GO:0000166">
    <property type="term" value="F:nucleotide binding"/>
    <property type="evidence" value="ECO:0007669"/>
    <property type="project" value="TreeGrafter"/>
</dbReference>
<dbReference type="CDD" id="cd11740">
    <property type="entry name" value="YajQ_like"/>
    <property type="match status" value="1"/>
</dbReference>
<dbReference type="Gene3D" id="3.30.70.860">
    <property type="match status" value="1"/>
</dbReference>
<dbReference type="Gene3D" id="3.30.70.990">
    <property type="entry name" value="YajQ-like, domain 2"/>
    <property type="match status" value="1"/>
</dbReference>
<dbReference type="HAMAP" id="MF_00632">
    <property type="entry name" value="YajQ"/>
    <property type="match status" value="1"/>
</dbReference>
<dbReference type="InterPro" id="IPR007551">
    <property type="entry name" value="DUF520"/>
</dbReference>
<dbReference type="InterPro" id="IPR035571">
    <property type="entry name" value="UPF0234-like_C"/>
</dbReference>
<dbReference type="InterPro" id="IPR035570">
    <property type="entry name" value="UPF0234_N"/>
</dbReference>
<dbReference type="InterPro" id="IPR036183">
    <property type="entry name" value="YajQ-like_sf"/>
</dbReference>
<dbReference type="NCBIfam" id="NF003819">
    <property type="entry name" value="PRK05412.1"/>
    <property type="match status" value="1"/>
</dbReference>
<dbReference type="PANTHER" id="PTHR30476">
    <property type="entry name" value="UPF0234 PROTEIN YAJQ"/>
    <property type="match status" value="1"/>
</dbReference>
<dbReference type="PANTHER" id="PTHR30476:SF0">
    <property type="entry name" value="UPF0234 PROTEIN YAJQ"/>
    <property type="match status" value="1"/>
</dbReference>
<dbReference type="Pfam" id="PF04461">
    <property type="entry name" value="DUF520"/>
    <property type="match status" value="1"/>
</dbReference>
<dbReference type="SUPFAM" id="SSF89963">
    <property type="entry name" value="YajQ-like"/>
    <property type="match status" value="2"/>
</dbReference>
<comment type="function">
    <text evidence="1">Nucleotide-binding protein.</text>
</comment>
<comment type="similarity">
    <text evidence="1">Belongs to the YajQ family.</text>
</comment>
<feature type="chain" id="PRO_0000261943" description="Nucleotide-binding protein HCH_04620">
    <location>
        <begin position="1"/>
        <end position="161"/>
    </location>
</feature>
<organism>
    <name type="scientific">Hahella chejuensis (strain KCTC 2396)</name>
    <dbReference type="NCBI Taxonomy" id="349521"/>
    <lineage>
        <taxon>Bacteria</taxon>
        <taxon>Pseudomonadati</taxon>
        <taxon>Pseudomonadota</taxon>
        <taxon>Gammaproteobacteria</taxon>
        <taxon>Oceanospirillales</taxon>
        <taxon>Hahellaceae</taxon>
        <taxon>Hahella</taxon>
    </lineage>
</organism>
<keyword id="KW-0547">Nucleotide-binding</keyword>
<keyword id="KW-1185">Reference proteome</keyword>
<proteinExistence type="inferred from homology"/>
<protein>
    <recommendedName>
        <fullName evidence="1">Nucleotide-binding protein HCH_04620</fullName>
    </recommendedName>
</protein>
<sequence>MPSFDIVSEIDRHELTNSVDQANRELEMRYDFRGVEASFTLSEKSVEMAAEQEFQLEQMLLILNTTLSKRKVDLRVLGDSTDQKSGKQVKRSYALKEGLEQKVAKDIVKKIKESKMKVQASIQGDQVRITGKKRDDLQEAIQLLRGDESLDVPMQFNNFRD</sequence>
<gene>
    <name type="ordered locus">HCH_04620</name>
</gene>
<reference key="1">
    <citation type="journal article" date="2005" name="Nucleic Acids Res.">
        <title>Genomic blueprint of Hahella chejuensis, a marine microbe producing an algicidal agent.</title>
        <authorList>
            <person name="Jeong H."/>
            <person name="Yim J.H."/>
            <person name="Lee C."/>
            <person name="Choi S.-H."/>
            <person name="Park Y.K."/>
            <person name="Yoon S.H."/>
            <person name="Hur C.-G."/>
            <person name="Kang H.-Y."/>
            <person name="Kim D."/>
            <person name="Lee H.H."/>
            <person name="Park K.H."/>
            <person name="Park S.-H."/>
            <person name="Park H.-S."/>
            <person name="Lee H.K."/>
            <person name="Oh T.K."/>
            <person name="Kim J.F."/>
        </authorList>
    </citation>
    <scope>NUCLEOTIDE SEQUENCE [LARGE SCALE GENOMIC DNA]</scope>
    <source>
        <strain>KCTC 2396</strain>
    </source>
</reference>